<proteinExistence type="evidence at protein level"/>
<accession>Q09533</accession>
<keyword id="KW-0002">3D-structure</keyword>
<keyword id="KW-1185">Reference proteome</keyword>
<keyword id="KW-0687">Ribonucleoprotein</keyword>
<keyword id="KW-0689">Ribosomal protein</keyword>
<name>RL10_CAEEL</name>
<feature type="chain" id="PRO_0000147112" description="Large ribosomal subunit protein uL16">
    <location>
        <begin position="1"/>
        <end position="214"/>
    </location>
</feature>
<protein>
    <recommendedName>
        <fullName evidence="2">Large ribosomal subunit protein uL16</fullName>
    </recommendedName>
    <alternativeName>
        <fullName>60S ribosomal protein L10</fullName>
    </alternativeName>
    <alternativeName>
        <fullName>QM protein homolog</fullName>
    </alternativeName>
</protein>
<sequence length="214" mass="24749">MGRRPARCYRYIKNKPYPKSRFCRGVPDAKIRIFDLGNKRANVDTFPACVHMMSNEREHLSSEALEAARICANKYMVKNCGKDGFHLRVRKHPFHVTRINKMLSCAGADRLQTGMRGAYGKPQGLVARVDIGDILFSMRIKEGNVKHAIEAFRRAKFKFPGRQIIVSSRKWGFTKWDREDYERMRAEGRLRSDGVGVQLQREHGPLTKWIENPI</sequence>
<organism>
    <name type="scientific">Caenorhabditis elegans</name>
    <dbReference type="NCBI Taxonomy" id="6239"/>
    <lineage>
        <taxon>Eukaryota</taxon>
        <taxon>Metazoa</taxon>
        <taxon>Ecdysozoa</taxon>
        <taxon>Nematoda</taxon>
        <taxon>Chromadorea</taxon>
        <taxon>Rhabditida</taxon>
        <taxon>Rhabditina</taxon>
        <taxon>Rhabditomorpha</taxon>
        <taxon>Rhabditoidea</taxon>
        <taxon>Rhabditidae</taxon>
        <taxon>Peloderinae</taxon>
        <taxon>Caenorhabditis</taxon>
    </lineage>
</organism>
<reference key="1">
    <citation type="journal article" date="1998" name="Science">
        <title>Genome sequence of the nematode C. elegans: a platform for investigating biology.</title>
        <authorList>
            <consortium name="The C. elegans sequencing consortium"/>
        </authorList>
    </citation>
    <scope>NUCLEOTIDE SEQUENCE [LARGE SCALE GENOMIC DNA]</scope>
    <source>
        <strain>Bristol N2</strain>
    </source>
</reference>
<comment type="subunit">
    <text evidence="1">Component of the large ribosomal subunit. Mature ribosomes consist of a small (40S) and a large (60S) subunit. The 40S subunit contains about 33 different proteins and 1 molecule of RNA (18S). The 60S subunit contains about 49 different proteins and 3 molecules of RNA (28S, 5.8S and 5S) (By similarity).</text>
</comment>
<comment type="similarity">
    <text evidence="2">Belongs to the universal ribosomal protein uL16 family.</text>
</comment>
<evidence type="ECO:0000250" key="1"/>
<evidence type="ECO:0000305" key="2"/>
<dbReference type="EMBL" id="Z48334">
    <property type="protein sequence ID" value="CAA88308.1"/>
    <property type="molecule type" value="Genomic_DNA"/>
</dbReference>
<dbReference type="PIR" id="T20688">
    <property type="entry name" value="T20688"/>
</dbReference>
<dbReference type="RefSeq" id="NP_495707.1">
    <property type="nucleotide sequence ID" value="NM_063306.9"/>
</dbReference>
<dbReference type="PDB" id="9BH5">
    <property type="method" value="EM"/>
    <property type="resolution" value="2.63 A"/>
    <property type="chains" value="CI=1-214"/>
</dbReference>
<dbReference type="PDB" id="9CAI">
    <property type="method" value="EM"/>
    <property type="resolution" value="2.59 A"/>
    <property type="chains" value="CI=1-214"/>
</dbReference>
<dbReference type="PDBsum" id="9BH5"/>
<dbReference type="PDBsum" id="9CAI"/>
<dbReference type="EMDB" id="EMD-44533"/>
<dbReference type="EMDB" id="EMD-45392"/>
<dbReference type="SMR" id="Q09533"/>
<dbReference type="BioGRID" id="39640">
    <property type="interactions" value="104"/>
</dbReference>
<dbReference type="DIP" id="DIP-24839N"/>
<dbReference type="FunCoup" id="Q09533">
    <property type="interactions" value="1665"/>
</dbReference>
<dbReference type="STRING" id="6239.F10B5.1.2"/>
<dbReference type="iPTMnet" id="Q09533"/>
<dbReference type="PaxDb" id="6239-F10B5.1.2"/>
<dbReference type="PeptideAtlas" id="Q09533"/>
<dbReference type="EnsemblMetazoa" id="F10B5.1.1">
    <property type="protein sequence ID" value="F10B5.1.1"/>
    <property type="gene ID" value="WBGene00004421"/>
</dbReference>
<dbReference type="GeneID" id="174311"/>
<dbReference type="KEGG" id="cel:CELE_F10B5.1"/>
<dbReference type="UCSC" id="F10B5.1.1">
    <property type="organism name" value="c. elegans"/>
</dbReference>
<dbReference type="AGR" id="WB:WBGene00004421"/>
<dbReference type="CTD" id="174311"/>
<dbReference type="WormBase" id="F10B5.1">
    <property type="protein sequence ID" value="CE01543"/>
    <property type="gene ID" value="WBGene00004421"/>
    <property type="gene designation" value="rpl-10L"/>
</dbReference>
<dbReference type="eggNOG" id="KOG0857">
    <property type="taxonomic scope" value="Eukaryota"/>
</dbReference>
<dbReference type="GeneTree" id="ENSGT00390000003897"/>
<dbReference type="HOGENOM" id="CLU_084051_0_0_1"/>
<dbReference type="InParanoid" id="Q09533"/>
<dbReference type="OMA" id="HHVIREN"/>
<dbReference type="OrthoDB" id="10258869at2759"/>
<dbReference type="PhylomeDB" id="Q09533"/>
<dbReference type="Reactome" id="R-CEL-156827">
    <property type="pathway name" value="L13a-mediated translational silencing of Ceruloplasmin expression"/>
</dbReference>
<dbReference type="Reactome" id="R-CEL-1799339">
    <property type="pathway name" value="SRP-dependent cotranslational protein targeting to membrane"/>
</dbReference>
<dbReference type="Reactome" id="R-CEL-72689">
    <property type="pathway name" value="Formation of a pool of free 40S subunits"/>
</dbReference>
<dbReference type="Reactome" id="R-CEL-72706">
    <property type="pathway name" value="GTP hydrolysis and joining of the 60S ribosomal subunit"/>
</dbReference>
<dbReference type="Reactome" id="R-CEL-975956">
    <property type="pathway name" value="Nonsense Mediated Decay (NMD) independent of the Exon Junction Complex (EJC)"/>
</dbReference>
<dbReference type="Reactome" id="R-CEL-975957">
    <property type="pathway name" value="Nonsense Mediated Decay (NMD) enhanced by the Exon Junction Complex (EJC)"/>
</dbReference>
<dbReference type="PRO" id="PR:Q09533"/>
<dbReference type="Proteomes" id="UP000001940">
    <property type="component" value="Chromosome II"/>
</dbReference>
<dbReference type="Bgee" id="WBGene00004421">
    <property type="expression patterns" value="Expressed in adult organism and 4 other cell types or tissues"/>
</dbReference>
<dbReference type="GO" id="GO:0022625">
    <property type="term" value="C:cytosolic large ribosomal subunit"/>
    <property type="evidence" value="ECO:0000318"/>
    <property type="project" value="GO_Central"/>
</dbReference>
<dbReference type="GO" id="GO:0003735">
    <property type="term" value="F:structural constituent of ribosome"/>
    <property type="evidence" value="ECO:0000318"/>
    <property type="project" value="GO_Central"/>
</dbReference>
<dbReference type="GO" id="GO:0006412">
    <property type="term" value="P:translation"/>
    <property type="evidence" value="ECO:0000318"/>
    <property type="project" value="GO_Central"/>
</dbReference>
<dbReference type="CDD" id="cd01433">
    <property type="entry name" value="Ribosomal_L16_L10e"/>
    <property type="match status" value="1"/>
</dbReference>
<dbReference type="FunFam" id="3.90.1170.10:FF:000002">
    <property type="entry name" value="60S ribosomal protein L10"/>
    <property type="match status" value="1"/>
</dbReference>
<dbReference type="FunFam" id="3.30.60.300:FF:000003">
    <property type="entry name" value="60S ribosomal protein L10, putative"/>
    <property type="match status" value="1"/>
</dbReference>
<dbReference type="Gene3D" id="3.90.1170.10">
    <property type="entry name" value="Ribosomal protein L10e/L16"/>
    <property type="match status" value="1"/>
</dbReference>
<dbReference type="InterPro" id="IPR047873">
    <property type="entry name" value="Ribosomal_uL16"/>
</dbReference>
<dbReference type="InterPro" id="IPR018255">
    <property type="entry name" value="Ribosomal_uL16_CS_euk_arc"/>
</dbReference>
<dbReference type="InterPro" id="IPR016180">
    <property type="entry name" value="Ribosomal_uL16_dom"/>
</dbReference>
<dbReference type="InterPro" id="IPR001197">
    <property type="entry name" value="Ribosomal_uL16_euk_arch"/>
</dbReference>
<dbReference type="InterPro" id="IPR036920">
    <property type="entry name" value="Ribosomal_uL16_sf"/>
</dbReference>
<dbReference type="NCBIfam" id="NF003239">
    <property type="entry name" value="PRK04199.1-4"/>
    <property type="match status" value="1"/>
</dbReference>
<dbReference type="NCBIfam" id="TIGR00279">
    <property type="entry name" value="uL16_euk_arch"/>
    <property type="match status" value="1"/>
</dbReference>
<dbReference type="PANTHER" id="PTHR11726">
    <property type="entry name" value="60S RIBOSOMAL PROTEIN L10"/>
    <property type="match status" value="1"/>
</dbReference>
<dbReference type="Pfam" id="PF00252">
    <property type="entry name" value="Ribosomal_L16"/>
    <property type="match status" value="1"/>
</dbReference>
<dbReference type="PIRSF" id="PIRSF005590">
    <property type="entry name" value="Ribosomal_L10"/>
    <property type="match status" value="1"/>
</dbReference>
<dbReference type="SUPFAM" id="SSF54686">
    <property type="entry name" value="Ribosomal protein L16p/L10e"/>
    <property type="match status" value="1"/>
</dbReference>
<dbReference type="PROSITE" id="PS01257">
    <property type="entry name" value="RIBOSOMAL_L10E"/>
    <property type="match status" value="1"/>
</dbReference>
<gene>
    <name type="primary">rpl-10L</name>
    <name type="ORF">F10B5.1</name>
</gene>